<reference key="1">
    <citation type="submission" date="2007-05" db="EMBL/GenBank/DDBJ databases">
        <title>Complete sequence of Thermotoga petrophila RKU-1.</title>
        <authorList>
            <consortium name="US DOE Joint Genome Institute"/>
            <person name="Copeland A."/>
            <person name="Lucas S."/>
            <person name="Lapidus A."/>
            <person name="Barry K."/>
            <person name="Glavina del Rio T."/>
            <person name="Dalin E."/>
            <person name="Tice H."/>
            <person name="Pitluck S."/>
            <person name="Sims D."/>
            <person name="Brettin T."/>
            <person name="Bruce D."/>
            <person name="Detter J.C."/>
            <person name="Han C."/>
            <person name="Tapia R."/>
            <person name="Schmutz J."/>
            <person name="Larimer F."/>
            <person name="Land M."/>
            <person name="Hauser L."/>
            <person name="Kyrpides N."/>
            <person name="Mikhailova N."/>
            <person name="Nelson K."/>
            <person name="Gogarten J.P."/>
            <person name="Noll K."/>
            <person name="Richardson P."/>
        </authorList>
    </citation>
    <scope>NUCLEOTIDE SEQUENCE [LARGE SCALE GENOMIC DNA]</scope>
    <source>
        <strain>ATCC BAA-488 / DSM 13995 / JCM 10881 / RKU-1</strain>
    </source>
</reference>
<proteinExistence type="inferred from homology"/>
<dbReference type="EC" id="3.1.26.3" evidence="1"/>
<dbReference type="EMBL" id="CP000702">
    <property type="protein sequence ID" value="ABQ47647.1"/>
    <property type="molecule type" value="Genomic_DNA"/>
</dbReference>
<dbReference type="RefSeq" id="WP_011944056.1">
    <property type="nucleotide sequence ID" value="NC_009486.1"/>
</dbReference>
<dbReference type="SMR" id="A5IN74"/>
<dbReference type="STRING" id="390874.Tpet_1641"/>
<dbReference type="KEGG" id="tpt:Tpet_1641"/>
<dbReference type="eggNOG" id="COG0571">
    <property type="taxonomic scope" value="Bacteria"/>
</dbReference>
<dbReference type="HOGENOM" id="CLU_000907_1_3_0"/>
<dbReference type="Proteomes" id="UP000006558">
    <property type="component" value="Chromosome"/>
</dbReference>
<dbReference type="GO" id="GO:0005737">
    <property type="term" value="C:cytoplasm"/>
    <property type="evidence" value="ECO:0007669"/>
    <property type="project" value="UniProtKB-SubCell"/>
</dbReference>
<dbReference type="GO" id="GO:0003725">
    <property type="term" value="F:double-stranded RNA binding"/>
    <property type="evidence" value="ECO:0007669"/>
    <property type="project" value="TreeGrafter"/>
</dbReference>
<dbReference type="GO" id="GO:0046872">
    <property type="term" value="F:metal ion binding"/>
    <property type="evidence" value="ECO:0007669"/>
    <property type="project" value="UniProtKB-KW"/>
</dbReference>
<dbReference type="GO" id="GO:0004525">
    <property type="term" value="F:ribonuclease III activity"/>
    <property type="evidence" value="ECO:0007669"/>
    <property type="project" value="UniProtKB-UniRule"/>
</dbReference>
<dbReference type="GO" id="GO:0019843">
    <property type="term" value="F:rRNA binding"/>
    <property type="evidence" value="ECO:0007669"/>
    <property type="project" value="UniProtKB-KW"/>
</dbReference>
<dbReference type="GO" id="GO:0006397">
    <property type="term" value="P:mRNA processing"/>
    <property type="evidence" value="ECO:0007669"/>
    <property type="project" value="UniProtKB-UniRule"/>
</dbReference>
<dbReference type="GO" id="GO:0010468">
    <property type="term" value="P:regulation of gene expression"/>
    <property type="evidence" value="ECO:0007669"/>
    <property type="project" value="TreeGrafter"/>
</dbReference>
<dbReference type="GO" id="GO:0006364">
    <property type="term" value="P:rRNA processing"/>
    <property type="evidence" value="ECO:0007669"/>
    <property type="project" value="UniProtKB-UniRule"/>
</dbReference>
<dbReference type="GO" id="GO:0008033">
    <property type="term" value="P:tRNA processing"/>
    <property type="evidence" value="ECO:0007669"/>
    <property type="project" value="UniProtKB-KW"/>
</dbReference>
<dbReference type="CDD" id="cd10845">
    <property type="entry name" value="DSRM_RNAse_III_family"/>
    <property type="match status" value="1"/>
</dbReference>
<dbReference type="CDD" id="cd00593">
    <property type="entry name" value="RIBOc"/>
    <property type="match status" value="1"/>
</dbReference>
<dbReference type="FunFam" id="1.10.1520.10:FF:000001">
    <property type="entry name" value="Ribonuclease 3"/>
    <property type="match status" value="1"/>
</dbReference>
<dbReference type="FunFam" id="3.30.160.20:FF:000003">
    <property type="entry name" value="Ribonuclease 3"/>
    <property type="match status" value="1"/>
</dbReference>
<dbReference type="Gene3D" id="3.30.160.20">
    <property type="match status" value="1"/>
</dbReference>
<dbReference type="Gene3D" id="1.10.1520.10">
    <property type="entry name" value="Ribonuclease III domain"/>
    <property type="match status" value="1"/>
</dbReference>
<dbReference type="HAMAP" id="MF_00104">
    <property type="entry name" value="RNase_III"/>
    <property type="match status" value="1"/>
</dbReference>
<dbReference type="InterPro" id="IPR014720">
    <property type="entry name" value="dsRBD_dom"/>
</dbReference>
<dbReference type="InterPro" id="IPR011907">
    <property type="entry name" value="RNase_III"/>
</dbReference>
<dbReference type="InterPro" id="IPR000999">
    <property type="entry name" value="RNase_III_dom"/>
</dbReference>
<dbReference type="InterPro" id="IPR036389">
    <property type="entry name" value="RNase_III_sf"/>
</dbReference>
<dbReference type="NCBIfam" id="TIGR02191">
    <property type="entry name" value="RNaseIII"/>
    <property type="match status" value="1"/>
</dbReference>
<dbReference type="PANTHER" id="PTHR11207:SF0">
    <property type="entry name" value="RIBONUCLEASE 3"/>
    <property type="match status" value="1"/>
</dbReference>
<dbReference type="PANTHER" id="PTHR11207">
    <property type="entry name" value="RIBONUCLEASE III"/>
    <property type="match status" value="1"/>
</dbReference>
<dbReference type="Pfam" id="PF00035">
    <property type="entry name" value="dsrm"/>
    <property type="match status" value="1"/>
</dbReference>
<dbReference type="Pfam" id="PF14622">
    <property type="entry name" value="Ribonucleas_3_3"/>
    <property type="match status" value="1"/>
</dbReference>
<dbReference type="SMART" id="SM00358">
    <property type="entry name" value="DSRM"/>
    <property type="match status" value="1"/>
</dbReference>
<dbReference type="SMART" id="SM00535">
    <property type="entry name" value="RIBOc"/>
    <property type="match status" value="1"/>
</dbReference>
<dbReference type="SUPFAM" id="SSF54768">
    <property type="entry name" value="dsRNA-binding domain-like"/>
    <property type="match status" value="1"/>
</dbReference>
<dbReference type="SUPFAM" id="SSF69065">
    <property type="entry name" value="RNase III domain-like"/>
    <property type="match status" value="1"/>
</dbReference>
<dbReference type="PROSITE" id="PS50137">
    <property type="entry name" value="DS_RBD"/>
    <property type="match status" value="1"/>
</dbReference>
<dbReference type="PROSITE" id="PS00517">
    <property type="entry name" value="RNASE_3_1"/>
    <property type="match status" value="1"/>
</dbReference>
<dbReference type="PROSITE" id="PS50142">
    <property type="entry name" value="RNASE_3_2"/>
    <property type="match status" value="1"/>
</dbReference>
<sequence>MNESERKIVEEFQKKTGINFKNEELLFRALCHSSYANEQNQAGRKDVESNEKLEFLGDAVLELFVCEILYKKYPEAEVGDLARAKSAAASEEVLAMVSRELNLGKFLFLGKGEEKTGGRDRDSILADAFEALLAAIYLDQGYHKIKELFEEEFELYIEKIMRGEMLFDYKTALQEIVQSEHKVPPEYVLVRTEKNDGDRIFVVEVRVDGKSIAMGRGRTKKEAEKEAARIAYEKLLKERS</sequence>
<evidence type="ECO:0000255" key="1">
    <source>
        <dbReference type="HAMAP-Rule" id="MF_00104"/>
    </source>
</evidence>
<protein>
    <recommendedName>
        <fullName evidence="1">Ribonuclease 3</fullName>
        <ecNumber evidence="1">3.1.26.3</ecNumber>
    </recommendedName>
    <alternativeName>
        <fullName evidence="1">Ribonuclease III</fullName>
        <shortName evidence="1">RNase III</shortName>
    </alternativeName>
</protein>
<comment type="function">
    <text evidence="1">Digests double-stranded RNA. Involved in the processing of primary rRNA transcript to yield the immediate precursors to the large and small rRNAs (23S and 16S). Processes some mRNAs, and tRNAs when they are encoded in the rRNA operon. Processes pre-crRNA and tracrRNA of type II CRISPR loci if present in the organism.</text>
</comment>
<comment type="catalytic activity">
    <reaction evidence="1">
        <text>Endonucleolytic cleavage to 5'-phosphomonoester.</text>
        <dbReference type="EC" id="3.1.26.3"/>
    </reaction>
</comment>
<comment type="cofactor">
    <cofactor evidence="1">
        <name>Mg(2+)</name>
        <dbReference type="ChEBI" id="CHEBI:18420"/>
    </cofactor>
</comment>
<comment type="subunit">
    <text evidence="1">Homodimer.</text>
</comment>
<comment type="subcellular location">
    <subcellularLocation>
        <location evidence="1">Cytoplasm</location>
    </subcellularLocation>
</comment>
<comment type="similarity">
    <text evidence="1">Belongs to the ribonuclease III family.</text>
</comment>
<feature type="chain" id="PRO_1000075846" description="Ribonuclease 3">
    <location>
        <begin position="1"/>
        <end position="240"/>
    </location>
</feature>
<feature type="domain" description="RNase III" evidence="1">
    <location>
        <begin position="9"/>
        <end position="141"/>
    </location>
</feature>
<feature type="domain" description="DRBM" evidence="1">
    <location>
        <begin position="168"/>
        <end position="237"/>
    </location>
</feature>
<feature type="active site" evidence="1">
    <location>
        <position position="58"/>
    </location>
</feature>
<feature type="active site" evidence="1">
    <location>
        <position position="130"/>
    </location>
</feature>
<feature type="binding site" evidence="1">
    <location>
        <position position="54"/>
    </location>
    <ligand>
        <name>Mg(2+)</name>
        <dbReference type="ChEBI" id="CHEBI:18420"/>
    </ligand>
</feature>
<feature type="binding site" evidence="1">
    <location>
        <position position="127"/>
    </location>
    <ligand>
        <name>Mg(2+)</name>
        <dbReference type="ChEBI" id="CHEBI:18420"/>
    </ligand>
</feature>
<feature type="binding site" evidence="1">
    <location>
        <position position="130"/>
    </location>
    <ligand>
        <name>Mg(2+)</name>
        <dbReference type="ChEBI" id="CHEBI:18420"/>
    </ligand>
</feature>
<keyword id="KW-0963">Cytoplasm</keyword>
<keyword id="KW-0255">Endonuclease</keyword>
<keyword id="KW-0378">Hydrolase</keyword>
<keyword id="KW-0460">Magnesium</keyword>
<keyword id="KW-0479">Metal-binding</keyword>
<keyword id="KW-0507">mRNA processing</keyword>
<keyword id="KW-0540">Nuclease</keyword>
<keyword id="KW-0694">RNA-binding</keyword>
<keyword id="KW-0698">rRNA processing</keyword>
<keyword id="KW-0699">rRNA-binding</keyword>
<keyword id="KW-0819">tRNA processing</keyword>
<organism>
    <name type="scientific">Thermotoga petrophila (strain ATCC BAA-488 / DSM 13995 / JCM 10881 / RKU-1)</name>
    <dbReference type="NCBI Taxonomy" id="390874"/>
    <lineage>
        <taxon>Bacteria</taxon>
        <taxon>Thermotogati</taxon>
        <taxon>Thermotogota</taxon>
        <taxon>Thermotogae</taxon>
        <taxon>Thermotogales</taxon>
        <taxon>Thermotogaceae</taxon>
        <taxon>Thermotoga</taxon>
    </lineage>
</organism>
<gene>
    <name evidence="1" type="primary">rnc</name>
    <name type="ordered locus">Tpet_1641</name>
</gene>
<name>RNC_THEP1</name>
<accession>A5IN74</accession>